<keyword id="KW-0113">Calvin cycle</keyword>
<keyword id="KW-0120">Carbon dioxide fixation</keyword>
<keyword id="KW-0614">Plasmid</keyword>
<gene>
    <name evidence="1" type="primary">cbbS</name>
    <name type="ordered locus">Smed_3925</name>
</gene>
<dbReference type="EMBL" id="AF211846">
    <property type="protein sequence ID" value="AAF25380.1"/>
    <property type="molecule type" value="Genomic_DNA"/>
</dbReference>
<dbReference type="EMBL" id="CP000739">
    <property type="protein sequence ID" value="ABR62735.1"/>
    <property type="molecule type" value="Genomic_DNA"/>
</dbReference>
<dbReference type="RefSeq" id="WP_011969557.1">
    <property type="nucleotide sequence ID" value="NC_009620.1"/>
</dbReference>
<dbReference type="RefSeq" id="YP_001312668.1">
    <property type="nucleotide sequence ID" value="NC_009620.1"/>
</dbReference>
<dbReference type="SMR" id="P56890"/>
<dbReference type="KEGG" id="smd:Smed_3925"/>
<dbReference type="PATRIC" id="fig|366394.8.peg.371"/>
<dbReference type="HOGENOM" id="CLU_098114_2_0_5"/>
<dbReference type="OrthoDB" id="9788955at2"/>
<dbReference type="Proteomes" id="UP000001108">
    <property type="component" value="Plasmid pSMED01"/>
</dbReference>
<dbReference type="GO" id="GO:0016984">
    <property type="term" value="F:ribulose-bisphosphate carboxylase activity"/>
    <property type="evidence" value="ECO:0007669"/>
    <property type="project" value="UniProtKB-UniRule"/>
</dbReference>
<dbReference type="GO" id="GO:0019253">
    <property type="term" value="P:reductive pentose-phosphate cycle"/>
    <property type="evidence" value="ECO:0007669"/>
    <property type="project" value="UniProtKB-UniRule"/>
</dbReference>
<dbReference type="CDD" id="cd03527">
    <property type="entry name" value="RuBisCO_small"/>
    <property type="match status" value="1"/>
</dbReference>
<dbReference type="Gene3D" id="3.30.190.10">
    <property type="entry name" value="Ribulose bisphosphate carboxylase, small subunit"/>
    <property type="match status" value="1"/>
</dbReference>
<dbReference type="HAMAP" id="MF_00859">
    <property type="entry name" value="RuBisCO_S_bact"/>
    <property type="match status" value="1"/>
</dbReference>
<dbReference type="InterPro" id="IPR024681">
    <property type="entry name" value="RuBisCO_ssu"/>
</dbReference>
<dbReference type="InterPro" id="IPR000894">
    <property type="entry name" value="RuBisCO_ssu_dom"/>
</dbReference>
<dbReference type="InterPro" id="IPR036385">
    <property type="entry name" value="RuBisCO_ssu_sf"/>
</dbReference>
<dbReference type="PANTHER" id="PTHR31262">
    <property type="entry name" value="RIBULOSE BISPHOSPHATE CARBOXYLASE SMALL CHAIN 1, CHLOROPLASTIC"/>
    <property type="match status" value="1"/>
</dbReference>
<dbReference type="PANTHER" id="PTHR31262:SF23">
    <property type="entry name" value="RIBULOSE BISPHOSPHATE CARBOXYLASE SMALL SUBUNIT"/>
    <property type="match status" value="1"/>
</dbReference>
<dbReference type="Pfam" id="PF00101">
    <property type="entry name" value="RuBisCO_small"/>
    <property type="match status" value="1"/>
</dbReference>
<dbReference type="SMART" id="SM00961">
    <property type="entry name" value="RuBisCO_small"/>
    <property type="match status" value="1"/>
</dbReference>
<dbReference type="SUPFAM" id="SSF55239">
    <property type="entry name" value="RuBisCO, small subunit"/>
    <property type="match status" value="1"/>
</dbReference>
<feature type="chain" id="PRO_0000198620" description="Ribulose bisphosphate carboxylase small subunit">
    <location>
        <begin position="1"/>
        <end position="129"/>
    </location>
</feature>
<feature type="region of interest" description="Disordered" evidence="2">
    <location>
        <begin position="104"/>
        <end position="129"/>
    </location>
</feature>
<feature type="compositionally biased region" description="Basic and acidic residues" evidence="2">
    <location>
        <begin position="104"/>
        <end position="120"/>
    </location>
</feature>
<sequence length="129" mass="15161">MRITQGCFSFLPDLTDEQITAQVEYCLGRGWAIGVEYTDDPHPRNTYWEMWGNPMFDLRDAKGVMMEVEDCRKAHPQDYIRLNAFDSSRGLETVTMSFIVNRPENEPSLRMTRTESDGRSQHYTWETQR</sequence>
<reference key="1">
    <citation type="submission" date="1999-12" db="EMBL/GenBank/DDBJ databases">
        <title>Genetic regulation of C1 metabolism in Sinorhizobium meliloti.</title>
        <authorList>
            <person name="Fenner B.J."/>
            <person name="Tiwari R.P."/>
            <person name="Dilworth M.J."/>
        </authorList>
    </citation>
    <scope>NUCLEOTIDE SEQUENCE [GENOMIC DNA]</scope>
</reference>
<reference key="2">
    <citation type="submission" date="2007-06" db="EMBL/GenBank/DDBJ databases">
        <title>Complete sequence of Sinorhizobium medicae WSM419 plasmid pSMED01.</title>
        <authorList>
            <consortium name="US DOE Joint Genome Institute"/>
            <person name="Copeland A."/>
            <person name="Lucas S."/>
            <person name="Lapidus A."/>
            <person name="Barry K."/>
            <person name="Glavina del Rio T."/>
            <person name="Dalin E."/>
            <person name="Tice H."/>
            <person name="Pitluck S."/>
            <person name="Chain P."/>
            <person name="Malfatti S."/>
            <person name="Shin M."/>
            <person name="Vergez L."/>
            <person name="Schmutz J."/>
            <person name="Larimer F."/>
            <person name="Land M."/>
            <person name="Hauser L."/>
            <person name="Kyrpides N."/>
            <person name="Mikhailova N."/>
            <person name="Reeve W.G."/>
            <person name="Richardson P."/>
        </authorList>
    </citation>
    <scope>NUCLEOTIDE SEQUENCE [LARGE SCALE GENOMIC DNA]</scope>
    <source>
        <strain>WSM419</strain>
    </source>
</reference>
<organism>
    <name type="scientific">Sinorhizobium medicae (strain WSM419)</name>
    <name type="common">Ensifer medicae</name>
    <dbReference type="NCBI Taxonomy" id="366394"/>
    <lineage>
        <taxon>Bacteria</taxon>
        <taxon>Pseudomonadati</taxon>
        <taxon>Pseudomonadota</taxon>
        <taxon>Alphaproteobacteria</taxon>
        <taxon>Hyphomicrobiales</taxon>
        <taxon>Rhizobiaceae</taxon>
        <taxon>Sinorhizobium/Ensifer group</taxon>
        <taxon>Sinorhizobium</taxon>
    </lineage>
</organism>
<evidence type="ECO:0000255" key="1">
    <source>
        <dbReference type="HAMAP-Rule" id="MF_00859"/>
    </source>
</evidence>
<evidence type="ECO:0000256" key="2">
    <source>
        <dbReference type="SAM" id="MobiDB-lite"/>
    </source>
</evidence>
<proteinExistence type="inferred from homology"/>
<comment type="function">
    <text evidence="1">RuBisCO catalyzes two reactions: the carboxylation of D-ribulose 1,5-bisphosphate, the primary event in carbon dioxide fixation, as well as the oxidative fragmentation of the pentose substrate. Both reactions occur simultaneously and in competition at the same active site. Although the small subunit is not catalytic it is essential for maximal activity.</text>
</comment>
<comment type="subunit">
    <text evidence="1">Heterohexadecamer of 8 large and 8 small subunits.</text>
</comment>
<comment type="miscellaneous">
    <text evidence="1">The basic functional RuBisCO is composed of a large chain homodimer in a 'head-to-tail' conformation. In form I RuBisCO this homodimer is arranged in a barrel-like tetramer with the small subunits forming a tetrameric 'cap' on each end of the 'barrel'.</text>
</comment>
<comment type="similarity">
    <text evidence="1">Belongs to the RuBisCO small chain family.</text>
</comment>
<accession>P56890</accession>
<accession>A6UGF5</accession>
<protein>
    <recommendedName>
        <fullName evidence="1">Ribulose bisphosphate carboxylase small subunit</fullName>
        <shortName evidence="1">RuBisCO small subunit</shortName>
    </recommendedName>
</protein>
<geneLocation type="plasmid">
    <name>pSMED01</name>
</geneLocation>
<name>RBS_SINMW</name>